<organism>
    <name type="scientific">Pseudomonas aeruginosa (strain ATCC 15692 / DSM 22644 / CIP 104116 / JCM 14847 / LMG 12228 / 1C / PRS 101 / PAO1)</name>
    <dbReference type="NCBI Taxonomy" id="208964"/>
    <lineage>
        <taxon>Bacteria</taxon>
        <taxon>Pseudomonadati</taxon>
        <taxon>Pseudomonadota</taxon>
        <taxon>Gammaproteobacteria</taxon>
        <taxon>Pseudomonadales</taxon>
        <taxon>Pseudomonadaceae</taxon>
        <taxon>Pseudomonas</taxon>
    </lineage>
</organism>
<accession>Q9HXW0</accession>
<feature type="chain" id="PRO_0000212083" description="Ribosomal RNA small subunit methyltransferase J">
    <location>
        <begin position="1"/>
        <end position="261"/>
    </location>
</feature>
<feature type="binding site" evidence="1">
    <location>
        <begin position="109"/>
        <end position="110"/>
    </location>
    <ligand>
        <name>S-adenosyl-L-methionine</name>
        <dbReference type="ChEBI" id="CHEBI:59789"/>
    </ligand>
</feature>
<feature type="binding site" evidence="1">
    <location>
        <begin position="125"/>
        <end position="126"/>
    </location>
    <ligand>
        <name>S-adenosyl-L-methionine</name>
        <dbReference type="ChEBI" id="CHEBI:59789"/>
    </ligand>
</feature>
<feature type="binding site" evidence="1">
    <location>
        <position position="179"/>
    </location>
    <ligand>
        <name>S-adenosyl-L-methionine</name>
        <dbReference type="ChEBI" id="CHEBI:59789"/>
    </ligand>
</feature>
<sequence length="261" mass="27904">MTDSAAPRLHVQALSADCAEAARRWAERLGLPLAADDEAEFAVQVGEQGLQVLQLGADSPGPVRVDFVEGASAHRRKFGGGSGQMIAKAVGVQPGIRPRVLDATAGLGRDGFVLASLGCEVTLVERQPLIAALLEDGLERARRDPDVAPIAARMRLLGGNSADLMRAWDGEAPQVVYLDPMFPHRDKSALVKKEMRLFRPLVGDDLDAPALLQAALALASHRVVVKRPRKAPIIEGPKPGYSLEGKSSRYDIYPKKALGKG</sequence>
<proteinExistence type="inferred from homology"/>
<keyword id="KW-0963">Cytoplasm</keyword>
<keyword id="KW-0489">Methyltransferase</keyword>
<keyword id="KW-1185">Reference proteome</keyword>
<keyword id="KW-0698">rRNA processing</keyword>
<keyword id="KW-0949">S-adenosyl-L-methionine</keyword>
<keyword id="KW-0808">Transferase</keyword>
<protein>
    <recommendedName>
        <fullName evidence="1">Ribosomal RNA small subunit methyltransferase J</fullName>
        <ecNumber evidence="1">2.1.1.242</ecNumber>
    </recommendedName>
    <alternativeName>
        <fullName evidence="1">16S rRNA m2G1516 methyltransferase</fullName>
    </alternativeName>
    <alternativeName>
        <fullName evidence="1">rRNA (guanine-N(2)-)-methyltransferase</fullName>
    </alternativeName>
</protein>
<evidence type="ECO:0000255" key="1">
    <source>
        <dbReference type="HAMAP-Rule" id="MF_01523"/>
    </source>
</evidence>
<dbReference type="EC" id="2.1.1.242" evidence="1"/>
<dbReference type="EMBL" id="AE004091">
    <property type="protein sequence ID" value="AAG07068.1"/>
    <property type="molecule type" value="Genomic_DNA"/>
</dbReference>
<dbReference type="PIR" id="E83186">
    <property type="entry name" value="E83186"/>
</dbReference>
<dbReference type="RefSeq" id="NP_252370.1">
    <property type="nucleotide sequence ID" value="NC_002516.2"/>
</dbReference>
<dbReference type="RefSeq" id="WP_003113853.1">
    <property type="nucleotide sequence ID" value="NZ_QZGE01000001.1"/>
</dbReference>
<dbReference type="SMR" id="Q9HXW0"/>
<dbReference type="FunCoup" id="Q9HXW0">
    <property type="interactions" value="17"/>
</dbReference>
<dbReference type="STRING" id="208964.PA3680"/>
<dbReference type="PaxDb" id="208964-PA3680"/>
<dbReference type="GeneID" id="879150"/>
<dbReference type="KEGG" id="pae:PA3680"/>
<dbReference type="PATRIC" id="fig|208964.12.peg.3849"/>
<dbReference type="PseudoCAP" id="PA3680"/>
<dbReference type="HOGENOM" id="CLU_076324_0_1_6"/>
<dbReference type="InParanoid" id="Q9HXW0"/>
<dbReference type="OrthoDB" id="3191794at2"/>
<dbReference type="PhylomeDB" id="Q9HXW0"/>
<dbReference type="BioCyc" id="PAER208964:G1FZ6-3750-MONOMER"/>
<dbReference type="Proteomes" id="UP000002438">
    <property type="component" value="Chromosome"/>
</dbReference>
<dbReference type="GO" id="GO:0005737">
    <property type="term" value="C:cytoplasm"/>
    <property type="evidence" value="ECO:0007669"/>
    <property type="project" value="UniProtKB-SubCell"/>
</dbReference>
<dbReference type="GO" id="GO:0036308">
    <property type="term" value="F:16S rRNA (guanine(1516)-N(2))-methyltransferase activity"/>
    <property type="evidence" value="ECO:0000318"/>
    <property type="project" value="GO_Central"/>
</dbReference>
<dbReference type="GO" id="GO:0070475">
    <property type="term" value="P:rRNA base methylation"/>
    <property type="evidence" value="ECO:0000318"/>
    <property type="project" value="GO_Central"/>
</dbReference>
<dbReference type="CDD" id="cd02440">
    <property type="entry name" value="AdoMet_MTases"/>
    <property type="match status" value="1"/>
</dbReference>
<dbReference type="Gene3D" id="3.40.50.150">
    <property type="entry name" value="Vaccinia Virus protein VP39"/>
    <property type="match status" value="1"/>
</dbReference>
<dbReference type="HAMAP" id="MF_01523">
    <property type="entry name" value="16SrRNA_methyltr_J"/>
    <property type="match status" value="1"/>
</dbReference>
<dbReference type="InterPro" id="IPR007536">
    <property type="entry name" value="16SrRNA_methylTrfase_J"/>
</dbReference>
<dbReference type="InterPro" id="IPR029063">
    <property type="entry name" value="SAM-dependent_MTases_sf"/>
</dbReference>
<dbReference type="PANTHER" id="PTHR36112">
    <property type="entry name" value="RIBOSOMAL RNA SMALL SUBUNIT METHYLTRANSFERASE J"/>
    <property type="match status" value="1"/>
</dbReference>
<dbReference type="PANTHER" id="PTHR36112:SF1">
    <property type="entry name" value="RIBOSOMAL RNA SMALL SUBUNIT METHYLTRANSFERASE J"/>
    <property type="match status" value="1"/>
</dbReference>
<dbReference type="Pfam" id="PF04445">
    <property type="entry name" value="SAM_MT"/>
    <property type="match status" value="1"/>
</dbReference>
<dbReference type="SUPFAM" id="SSF53335">
    <property type="entry name" value="S-adenosyl-L-methionine-dependent methyltransferases"/>
    <property type="match status" value="1"/>
</dbReference>
<name>RSMJ_PSEAE</name>
<reference key="1">
    <citation type="journal article" date="2000" name="Nature">
        <title>Complete genome sequence of Pseudomonas aeruginosa PAO1, an opportunistic pathogen.</title>
        <authorList>
            <person name="Stover C.K."/>
            <person name="Pham X.-Q.T."/>
            <person name="Erwin A.L."/>
            <person name="Mizoguchi S.D."/>
            <person name="Warrener P."/>
            <person name="Hickey M.J."/>
            <person name="Brinkman F.S.L."/>
            <person name="Hufnagle W.O."/>
            <person name="Kowalik D.J."/>
            <person name="Lagrou M."/>
            <person name="Garber R.L."/>
            <person name="Goltry L."/>
            <person name="Tolentino E."/>
            <person name="Westbrock-Wadman S."/>
            <person name="Yuan Y."/>
            <person name="Brody L.L."/>
            <person name="Coulter S.N."/>
            <person name="Folger K.R."/>
            <person name="Kas A."/>
            <person name="Larbig K."/>
            <person name="Lim R.M."/>
            <person name="Smith K.A."/>
            <person name="Spencer D.H."/>
            <person name="Wong G.K.-S."/>
            <person name="Wu Z."/>
            <person name="Paulsen I.T."/>
            <person name="Reizer J."/>
            <person name="Saier M.H. Jr."/>
            <person name="Hancock R.E.W."/>
            <person name="Lory S."/>
            <person name="Olson M.V."/>
        </authorList>
    </citation>
    <scope>NUCLEOTIDE SEQUENCE [LARGE SCALE GENOMIC DNA]</scope>
    <source>
        <strain>ATCC 15692 / DSM 22644 / CIP 104116 / JCM 14847 / LMG 12228 / 1C / PRS 101 / PAO1</strain>
    </source>
</reference>
<comment type="function">
    <text evidence="1">Specifically methylates the guanosine in position 1516 of 16S rRNA.</text>
</comment>
<comment type="catalytic activity">
    <reaction evidence="1">
        <text>guanosine(1516) in 16S rRNA + S-adenosyl-L-methionine = N(2)-methylguanosine(1516) in 16S rRNA + S-adenosyl-L-homocysteine + H(+)</text>
        <dbReference type="Rhea" id="RHEA:43220"/>
        <dbReference type="Rhea" id="RHEA-COMP:10412"/>
        <dbReference type="Rhea" id="RHEA-COMP:10413"/>
        <dbReference type="ChEBI" id="CHEBI:15378"/>
        <dbReference type="ChEBI" id="CHEBI:57856"/>
        <dbReference type="ChEBI" id="CHEBI:59789"/>
        <dbReference type="ChEBI" id="CHEBI:74269"/>
        <dbReference type="ChEBI" id="CHEBI:74481"/>
        <dbReference type="EC" id="2.1.1.242"/>
    </reaction>
</comment>
<comment type="subcellular location">
    <subcellularLocation>
        <location evidence="1">Cytoplasm</location>
    </subcellularLocation>
</comment>
<comment type="similarity">
    <text evidence="1">Belongs to the methyltransferase superfamily. RsmJ family.</text>
</comment>
<gene>
    <name evidence="1" type="primary">rsmJ</name>
    <name type="ordered locus">PA3680</name>
</gene>